<feature type="chain" id="PRO_1000142322" description="Large ribosomal subunit protein uL22">
    <location>
        <begin position="1"/>
        <end position="111"/>
    </location>
</feature>
<gene>
    <name evidence="1" type="primary">rplV</name>
    <name type="ordered locus">Teth514_0872</name>
</gene>
<proteinExistence type="inferred from homology"/>
<organism>
    <name type="scientific">Thermoanaerobacter sp. (strain X514)</name>
    <dbReference type="NCBI Taxonomy" id="399726"/>
    <lineage>
        <taxon>Bacteria</taxon>
        <taxon>Bacillati</taxon>
        <taxon>Bacillota</taxon>
        <taxon>Clostridia</taxon>
        <taxon>Thermoanaerobacterales</taxon>
        <taxon>Thermoanaerobacteraceae</taxon>
        <taxon>Thermoanaerobacter</taxon>
    </lineage>
</organism>
<accession>B0K5P8</accession>
<protein>
    <recommendedName>
        <fullName evidence="1">Large ribosomal subunit protein uL22</fullName>
    </recommendedName>
    <alternativeName>
        <fullName evidence="2">50S ribosomal protein L22</fullName>
    </alternativeName>
</protein>
<name>RL22_THEPX</name>
<evidence type="ECO:0000255" key="1">
    <source>
        <dbReference type="HAMAP-Rule" id="MF_01331"/>
    </source>
</evidence>
<evidence type="ECO:0000305" key="2"/>
<reference key="1">
    <citation type="submission" date="2008-01" db="EMBL/GenBank/DDBJ databases">
        <title>Complete sequence of Thermoanaerobacter sp. X514.</title>
        <authorList>
            <consortium name="US DOE Joint Genome Institute"/>
            <person name="Copeland A."/>
            <person name="Lucas S."/>
            <person name="Lapidus A."/>
            <person name="Barry K."/>
            <person name="Glavina del Rio T."/>
            <person name="Dalin E."/>
            <person name="Tice H."/>
            <person name="Pitluck S."/>
            <person name="Bruce D."/>
            <person name="Goodwin L."/>
            <person name="Saunders E."/>
            <person name="Brettin T."/>
            <person name="Detter J.C."/>
            <person name="Han C."/>
            <person name="Schmutz J."/>
            <person name="Larimer F."/>
            <person name="Land M."/>
            <person name="Hauser L."/>
            <person name="Kyrpides N."/>
            <person name="Kim E."/>
            <person name="Hemme C."/>
            <person name="Fields M.W."/>
            <person name="He Z."/>
            <person name="Zhou J."/>
            <person name="Richardson P."/>
        </authorList>
    </citation>
    <scope>NUCLEOTIDE SEQUENCE [LARGE SCALE GENOMIC DNA]</scope>
    <source>
        <strain>X514</strain>
    </source>
</reference>
<sequence>MEARAIARYVRISPRKVRLVLNLIRGKHVDEALTILRFTPKRASGIVAKVLKSAIANAENNHGMNRDNLYVAKAVADEGPTMKRVFPRAMGRADIMRKRTSHITIVVKEKE</sequence>
<dbReference type="EMBL" id="CP000923">
    <property type="protein sequence ID" value="ABY92174.1"/>
    <property type="molecule type" value="Genomic_DNA"/>
</dbReference>
<dbReference type="RefSeq" id="WP_003868565.1">
    <property type="nucleotide sequence ID" value="NC_010320.1"/>
</dbReference>
<dbReference type="SMR" id="B0K5P8"/>
<dbReference type="KEGG" id="tex:Teth514_0872"/>
<dbReference type="HOGENOM" id="CLU_083987_3_3_9"/>
<dbReference type="Proteomes" id="UP000002155">
    <property type="component" value="Chromosome"/>
</dbReference>
<dbReference type="GO" id="GO:0022625">
    <property type="term" value="C:cytosolic large ribosomal subunit"/>
    <property type="evidence" value="ECO:0007669"/>
    <property type="project" value="TreeGrafter"/>
</dbReference>
<dbReference type="GO" id="GO:0019843">
    <property type="term" value="F:rRNA binding"/>
    <property type="evidence" value="ECO:0007669"/>
    <property type="project" value="UniProtKB-UniRule"/>
</dbReference>
<dbReference type="GO" id="GO:0003735">
    <property type="term" value="F:structural constituent of ribosome"/>
    <property type="evidence" value="ECO:0007669"/>
    <property type="project" value="InterPro"/>
</dbReference>
<dbReference type="GO" id="GO:0006412">
    <property type="term" value="P:translation"/>
    <property type="evidence" value="ECO:0007669"/>
    <property type="project" value="UniProtKB-UniRule"/>
</dbReference>
<dbReference type="CDD" id="cd00336">
    <property type="entry name" value="Ribosomal_L22"/>
    <property type="match status" value="1"/>
</dbReference>
<dbReference type="FunFam" id="3.90.470.10:FF:000011">
    <property type="entry name" value="50S ribosomal protein L22"/>
    <property type="match status" value="1"/>
</dbReference>
<dbReference type="Gene3D" id="3.90.470.10">
    <property type="entry name" value="Ribosomal protein L22/L17"/>
    <property type="match status" value="1"/>
</dbReference>
<dbReference type="HAMAP" id="MF_01331_B">
    <property type="entry name" value="Ribosomal_uL22_B"/>
    <property type="match status" value="1"/>
</dbReference>
<dbReference type="InterPro" id="IPR001063">
    <property type="entry name" value="Ribosomal_uL22"/>
</dbReference>
<dbReference type="InterPro" id="IPR005727">
    <property type="entry name" value="Ribosomal_uL22_bac/chlpt-type"/>
</dbReference>
<dbReference type="InterPro" id="IPR047867">
    <property type="entry name" value="Ribosomal_uL22_bac/org-type"/>
</dbReference>
<dbReference type="InterPro" id="IPR018260">
    <property type="entry name" value="Ribosomal_uL22_CS"/>
</dbReference>
<dbReference type="InterPro" id="IPR036394">
    <property type="entry name" value="Ribosomal_uL22_sf"/>
</dbReference>
<dbReference type="NCBIfam" id="TIGR01044">
    <property type="entry name" value="rplV_bact"/>
    <property type="match status" value="1"/>
</dbReference>
<dbReference type="PANTHER" id="PTHR13501">
    <property type="entry name" value="CHLOROPLAST 50S RIBOSOMAL PROTEIN L22-RELATED"/>
    <property type="match status" value="1"/>
</dbReference>
<dbReference type="PANTHER" id="PTHR13501:SF8">
    <property type="entry name" value="LARGE RIBOSOMAL SUBUNIT PROTEIN UL22M"/>
    <property type="match status" value="1"/>
</dbReference>
<dbReference type="Pfam" id="PF00237">
    <property type="entry name" value="Ribosomal_L22"/>
    <property type="match status" value="1"/>
</dbReference>
<dbReference type="SUPFAM" id="SSF54843">
    <property type="entry name" value="Ribosomal protein L22"/>
    <property type="match status" value="1"/>
</dbReference>
<dbReference type="PROSITE" id="PS00464">
    <property type="entry name" value="RIBOSOMAL_L22"/>
    <property type="match status" value="1"/>
</dbReference>
<keyword id="KW-0687">Ribonucleoprotein</keyword>
<keyword id="KW-0689">Ribosomal protein</keyword>
<keyword id="KW-0694">RNA-binding</keyword>
<keyword id="KW-0699">rRNA-binding</keyword>
<comment type="function">
    <text evidence="1">This protein binds specifically to 23S rRNA; its binding is stimulated by other ribosomal proteins, e.g. L4, L17, and L20. It is important during the early stages of 50S assembly. It makes multiple contacts with different domains of the 23S rRNA in the assembled 50S subunit and ribosome (By similarity).</text>
</comment>
<comment type="function">
    <text evidence="1">The globular domain of the protein is located near the polypeptide exit tunnel on the outside of the subunit, while an extended beta-hairpin is found that lines the wall of the exit tunnel in the center of the 70S ribosome.</text>
</comment>
<comment type="subunit">
    <text evidence="1">Part of the 50S ribosomal subunit.</text>
</comment>
<comment type="similarity">
    <text evidence="1">Belongs to the universal ribosomal protein uL22 family.</text>
</comment>